<sequence length="255" mass="28536">MAKESIQAIKEALLTVTDATDERLASWREDERSGVQQAIKQWERRQLAKEKEWQLFKEMSQFEEAAYKKGHRLIAGIDEVGRGPLAGPVVTAAVILPKDCQLLGLNDSKKLSAKKRETLYNQIQEQAVAIGLGIADQGVIDQINIYQATKQAMKMAIDDLAFTPDYLLIDAMQLDVPQPQESLIKGDARSISIAAASIIAKVTRDRLMEEYDELYPGYGFKNNAGYGTKEHLLGLEKYGVTPIHRRTFAPIKDMI</sequence>
<proteinExistence type="inferred from homology"/>
<accession>Q834J7</accession>
<gene>
    <name evidence="1" type="primary">rnhB</name>
    <name type="ordered locus">EF_1653</name>
</gene>
<keyword id="KW-0963">Cytoplasm</keyword>
<keyword id="KW-0255">Endonuclease</keyword>
<keyword id="KW-0378">Hydrolase</keyword>
<keyword id="KW-0464">Manganese</keyword>
<keyword id="KW-0479">Metal-binding</keyword>
<keyword id="KW-0540">Nuclease</keyword>
<keyword id="KW-1185">Reference proteome</keyword>
<feature type="chain" id="PRO_0000111574" description="Ribonuclease HII">
    <location>
        <begin position="1"/>
        <end position="255"/>
    </location>
</feature>
<feature type="domain" description="RNase H type-2" evidence="2">
    <location>
        <begin position="72"/>
        <end position="255"/>
    </location>
</feature>
<feature type="binding site" evidence="1">
    <location>
        <position position="78"/>
    </location>
    <ligand>
        <name>a divalent metal cation</name>
        <dbReference type="ChEBI" id="CHEBI:60240"/>
    </ligand>
</feature>
<feature type="binding site" evidence="1">
    <location>
        <position position="79"/>
    </location>
    <ligand>
        <name>a divalent metal cation</name>
        <dbReference type="ChEBI" id="CHEBI:60240"/>
    </ligand>
</feature>
<feature type="binding site" evidence="1">
    <location>
        <position position="170"/>
    </location>
    <ligand>
        <name>a divalent metal cation</name>
        <dbReference type="ChEBI" id="CHEBI:60240"/>
    </ligand>
</feature>
<evidence type="ECO:0000255" key="1">
    <source>
        <dbReference type="HAMAP-Rule" id="MF_00052"/>
    </source>
</evidence>
<evidence type="ECO:0000255" key="2">
    <source>
        <dbReference type="PROSITE-ProRule" id="PRU01319"/>
    </source>
</evidence>
<organism>
    <name type="scientific">Enterococcus faecalis (strain ATCC 700802 / V583)</name>
    <dbReference type="NCBI Taxonomy" id="226185"/>
    <lineage>
        <taxon>Bacteria</taxon>
        <taxon>Bacillati</taxon>
        <taxon>Bacillota</taxon>
        <taxon>Bacilli</taxon>
        <taxon>Lactobacillales</taxon>
        <taxon>Enterococcaceae</taxon>
        <taxon>Enterococcus</taxon>
    </lineage>
</organism>
<dbReference type="EC" id="3.1.26.4" evidence="1"/>
<dbReference type="EMBL" id="AE016830">
    <property type="protein sequence ID" value="AAO81431.1"/>
    <property type="molecule type" value="Genomic_DNA"/>
</dbReference>
<dbReference type="RefSeq" id="NP_815361.1">
    <property type="nucleotide sequence ID" value="NC_004668.1"/>
</dbReference>
<dbReference type="RefSeq" id="WP_002369352.1">
    <property type="nucleotide sequence ID" value="NZ_KE136528.1"/>
</dbReference>
<dbReference type="SMR" id="Q834J7"/>
<dbReference type="STRING" id="226185.EF_1653"/>
<dbReference type="EnsemblBacteria" id="AAO81431">
    <property type="protein sequence ID" value="AAO81431"/>
    <property type="gene ID" value="EF_1653"/>
</dbReference>
<dbReference type="KEGG" id="efa:EF1653"/>
<dbReference type="PATRIC" id="fig|226185.45.peg.1858"/>
<dbReference type="eggNOG" id="COG0164">
    <property type="taxonomic scope" value="Bacteria"/>
</dbReference>
<dbReference type="HOGENOM" id="CLU_036532_2_1_9"/>
<dbReference type="Proteomes" id="UP000001415">
    <property type="component" value="Chromosome"/>
</dbReference>
<dbReference type="GO" id="GO:0005737">
    <property type="term" value="C:cytoplasm"/>
    <property type="evidence" value="ECO:0007669"/>
    <property type="project" value="UniProtKB-SubCell"/>
</dbReference>
<dbReference type="GO" id="GO:0032299">
    <property type="term" value="C:ribonuclease H2 complex"/>
    <property type="evidence" value="ECO:0007669"/>
    <property type="project" value="TreeGrafter"/>
</dbReference>
<dbReference type="GO" id="GO:0030145">
    <property type="term" value="F:manganese ion binding"/>
    <property type="evidence" value="ECO:0007669"/>
    <property type="project" value="UniProtKB-UniRule"/>
</dbReference>
<dbReference type="GO" id="GO:0003723">
    <property type="term" value="F:RNA binding"/>
    <property type="evidence" value="ECO:0007669"/>
    <property type="project" value="InterPro"/>
</dbReference>
<dbReference type="GO" id="GO:0004523">
    <property type="term" value="F:RNA-DNA hybrid ribonuclease activity"/>
    <property type="evidence" value="ECO:0007669"/>
    <property type="project" value="UniProtKB-UniRule"/>
</dbReference>
<dbReference type="GO" id="GO:0043137">
    <property type="term" value="P:DNA replication, removal of RNA primer"/>
    <property type="evidence" value="ECO:0007669"/>
    <property type="project" value="TreeGrafter"/>
</dbReference>
<dbReference type="GO" id="GO:0006298">
    <property type="term" value="P:mismatch repair"/>
    <property type="evidence" value="ECO:0007669"/>
    <property type="project" value="TreeGrafter"/>
</dbReference>
<dbReference type="CDD" id="cd07182">
    <property type="entry name" value="RNase_HII_bacteria_HII_like"/>
    <property type="match status" value="1"/>
</dbReference>
<dbReference type="FunFam" id="3.30.420.10:FF:000006">
    <property type="entry name" value="Ribonuclease HII"/>
    <property type="match status" value="1"/>
</dbReference>
<dbReference type="Gene3D" id="3.30.420.10">
    <property type="entry name" value="Ribonuclease H-like superfamily/Ribonuclease H"/>
    <property type="match status" value="1"/>
</dbReference>
<dbReference type="HAMAP" id="MF_00052_B">
    <property type="entry name" value="RNase_HII_B"/>
    <property type="match status" value="1"/>
</dbReference>
<dbReference type="InterPro" id="IPR022898">
    <property type="entry name" value="RNase_HII"/>
</dbReference>
<dbReference type="InterPro" id="IPR001352">
    <property type="entry name" value="RNase_HII/HIII"/>
</dbReference>
<dbReference type="InterPro" id="IPR024567">
    <property type="entry name" value="RNase_HII/HIII_dom"/>
</dbReference>
<dbReference type="InterPro" id="IPR012337">
    <property type="entry name" value="RNaseH-like_sf"/>
</dbReference>
<dbReference type="InterPro" id="IPR036397">
    <property type="entry name" value="RNaseH_sf"/>
</dbReference>
<dbReference type="NCBIfam" id="NF000594">
    <property type="entry name" value="PRK00015.1-1"/>
    <property type="match status" value="1"/>
</dbReference>
<dbReference type="NCBIfam" id="NF000595">
    <property type="entry name" value="PRK00015.1-3"/>
    <property type="match status" value="1"/>
</dbReference>
<dbReference type="PANTHER" id="PTHR10954">
    <property type="entry name" value="RIBONUCLEASE H2 SUBUNIT A"/>
    <property type="match status" value="1"/>
</dbReference>
<dbReference type="PANTHER" id="PTHR10954:SF18">
    <property type="entry name" value="RIBONUCLEASE HII"/>
    <property type="match status" value="1"/>
</dbReference>
<dbReference type="Pfam" id="PF01351">
    <property type="entry name" value="RNase_HII"/>
    <property type="match status" value="1"/>
</dbReference>
<dbReference type="SUPFAM" id="SSF53098">
    <property type="entry name" value="Ribonuclease H-like"/>
    <property type="match status" value="1"/>
</dbReference>
<dbReference type="PROSITE" id="PS51975">
    <property type="entry name" value="RNASE_H_2"/>
    <property type="match status" value="1"/>
</dbReference>
<protein>
    <recommendedName>
        <fullName evidence="1">Ribonuclease HII</fullName>
        <shortName evidence="1">RNase HII</shortName>
        <ecNumber evidence="1">3.1.26.4</ecNumber>
    </recommendedName>
</protein>
<name>RNH2_ENTFA</name>
<comment type="function">
    <text evidence="1">Endonuclease that specifically degrades the RNA of RNA-DNA hybrids.</text>
</comment>
<comment type="catalytic activity">
    <reaction evidence="1">
        <text>Endonucleolytic cleavage to 5'-phosphomonoester.</text>
        <dbReference type="EC" id="3.1.26.4"/>
    </reaction>
</comment>
<comment type="cofactor">
    <cofactor evidence="1">
        <name>Mn(2+)</name>
        <dbReference type="ChEBI" id="CHEBI:29035"/>
    </cofactor>
    <cofactor evidence="1">
        <name>Mg(2+)</name>
        <dbReference type="ChEBI" id="CHEBI:18420"/>
    </cofactor>
    <text evidence="1">Manganese or magnesium. Binds 1 divalent metal ion per monomer in the absence of substrate. May bind a second metal ion after substrate binding.</text>
</comment>
<comment type="subcellular location">
    <subcellularLocation>
        <location evidence="1">Cytoplasm</location>
    </subcellularLocation>
</comment>
<comment type="similarity">
    <text evidence="1">Belongs to the RNase HII family.</text>
</comment>
<reference key="1">
    <citation type="journal article" date="2003" name="Science">
        <title>Role of mobile DNA in the evolution of vancomycin-resistant Enterococcus faecalis.</title>
        <authorList>
            <person name="Paulsen I.T."/>
            <person name="Banerjei L."/>
            <person name="Myers G.S.A."/>
            <person name="Nelson K.E."/>
            <person name="Seshadri R."/>
            <person name="Read T.D."/>
            <person name="Fouts D.E."/>
            <person name="Eisen J.A."/>
            <person name="Gill S.R."/>
            <person name="Heidelberg J.F."/>
            <person name="Tettelin H."/>
            <person name="Dodson R.J."/>
            <person name="Umayam L.A."/>
            <person name="Brinkac L.M."/>
            <person name="Beanan M.J."/>
            <person name="Daugherty S.C."/>
            <person name="DeBoy R.T."/>
            <person name="Durkin S.A."/>
            <person name="Kolonay J.F."/>
            <person name="Madupu R."/>
            <person name="Nelson W.C."/>
            <person name="Vamathevan J.J."/>
            <person name="Tran B."/>
            <person name="Upton J."/>
            <person name="Hansen T."/>
            <person name="Shetty J."/>
            <person name="Khouri H.M."/>
            <person name="Utterback T.R."/>
            <person name="Radune D."/>
            <person name="Ketchum K.A."/>
            <person name="Dougherty B.A."/>
            <person name="Fraser C.M."/>
        </authorList>
    </citation>
    <scope>NUCLEOTIDE SEQUENCE [LARGE SCALE GENOMIC DNA]</scope>
    <source>
        <strain>ATCC 700802 / V583</strain>
    </source>
</reference>